<accession>Q7F8T6</accession>
<accession>A0A0P0XH89</accession>
<accession>Q7F8T5</accession>
<feature type="chain" id="PRO_0000414605" description="Tricin synthase 2">
    <location>
        <begin position="1"/>
        <end position="292"/>
    </location>
</feature>
<feature type="region of interest" description="Disordered" evidence="2">
    <location>
        <begin position="21"/>
        <end position="46"/>
    </location>
</feature>
<feature type="compositionally biased region" description="Polar residues" evidence="2">
    <location>
        <begin position="23"/>
        <end position="32"/>
    </location>
</feature>
<feature type="binding site" evidence="1">
    <location>
        <position position="108"/>
    </location>
    <ligand>
        <name>S-adenosyl-L-methionine</name>
        <dbReference type="ChEBI" id="CHEBI:59789"/>
    </ligand>
</feature>
<feature type="binding site" evidence="1">
    <location>
        <position position="130"/>
    </location>
    <ligand>
        <name>S-adenosyl-L-methionine</name>
        <dbReference type="ChEBI" id="CHEBI:59789"/>
    </ligand>
</feature>
<feature type="binding site" evidence="1">
    <location>
        <begin position="132"/>
        <end position="133"/>
    </location>
    <ligand>
        <name>S-adenosyl-L-methionine</name>
        <dbReference type="ChEBI" id="CHEBI:59789"/>
    </ligand>
</feature>
<feature type="binding site" evidence="1">
    <location>
        <position position="138"/>
    </location>
    <ligand>
        <name>S-adenosyl-L-methionine</name>
        <dbReference type="ChEBI" id="CHEBI:59789"/>
    </ligand>
</feature>
<feature type="binding site" evidence="1">
    <location>
        <position position="156"/>
    </location>
    <ligand>
        <name>S-adenosyl-L-methionine</name>
        <dbReference type="ChEBI" id="CHEBI:59789"/>
    </ligand>
</feature>
<feature type="binding site" evidence="1">
    <location>
        <position position="185"/>
    </location>
    <ligand>
        <name>S-adenosyl-L-methionine</name>
        <dbReference type="ChEBI" id="CHEBI:59789"/>
    </ligand>
</feature>
<feature type="binding site" evidence="1">
    <location>
        <position position="208"/>
    </location>
    <ligand>
        <name>a divalent metal cation</name>
        <dbReference type="ChEBI" id="CHEBI:60240"/>
    </ligand>
</feature>
<feature type="binding site" evidence="1">
    <location>
        <position position="210"/>
    </location>
    <ligand>
        <name>S-adenosyl-L-methionine</name>
        <dbReference type="ChEBI" id="CHEBI:59789"/>
    </ligand>
</feature>
<feature type="binding site" evidence="1">
    <location>
        <position position="234"/>
    </location>
    <ligand>
        <name>a divalent metal cation</name>
        <dbReference type="ChEBI" id="CHEBI:60240"/>
    </ligand>
</feature>
<feature type="binding site" evidence="1">
    <location>
        <position position="235"/>
    </location>
    <ligand>
        <name>a divalent metal cation</name>
        <dbReference type="ChEBI" id="CHEBI:60240"/>
    </ligand>
</feature>
<feature type="splice variant" id="VSP_042108" description="In isoform 2." evidence="4">
    <original>SMACTKVWRSTMYTPRRLKRTTPASRVSSTAMAAANGDASHGANGGIQIQSKEMKTAIHSNDSPKTLLKSESLHEYMLNTMVYPRENEFMRELRLITSEHTY</original>
    <variation>MLCCVTFLLDSIS</variation>
    <location>
        <begin position="2"/>
        <end position="103"/>
    </location>
</feature>
<feature type="mutagenesis site" description="40% loss of activity." evidence="3">
    <original>E</original>
    <variation>L</variation>
    <location>
        <position position="112"/>
    </location>
</feature>
<feature type="mutagenesis site" description="Total loss of activity." evidence="3">
    <original>D</original>
    <variation>L</variation>
    <location>
        <position position="208"/>
    </location>
</feature>
<feature type="mutagenesis site" description="Total loss of activity." evidence="3">
    <original>D</original>
    <variation>L</variation>
    <location>
        <position position="234"/>
    </location>
</feature>
<feature type="mutagenesis site" description="Total loss of activity." evidence="3">
    <original>N</original>
    <variation>L</variation>
    <location>
        <position position="235"/>
    </location>
</feature>
<evidence type="ECO:0000255" key="1">
    <source>
        <dbReference type="PROSITE-ProRule" id="PRU01019"/>
    </source>
</evidence>
<evidence type="ECO:0000256" key="2">
    <source>
        <dbReference type="SAM" id="MobiDB-lite"/>
    </source>
</evidence>
<evidence type="ECO:0000269" key="3">
    <source>
    </source>
</evidence>
<evidence type="ECO:0000303" key="4">
    <source>
    </source>
</evidence>
<sequence>MSMACTKVWRSTMYTPRRLKRTTPASRVSSTAMAAANGDASHGANGGIQIQSKEMKTAIHSNDSPKTLLKSESLHEYMLNTMVYPRENEFMRELRLITSEHTYGFMSSPPEEGQLLSLLLNLTGAKNTIEVGVFTGCSVLATALAIPDDGKVVAIDVSREYFDLGLPVIKKAGVAHKVDFREGAAMPILDNLLANEENEGKFDFAFVDADKGNYGEYHERLLRLVRAGGVLAYDNTLWGGSVALEDDSVLEEFDQDIRRSIVAFNAKIAGDPRVEAVQLPVSDGITLCRRLV</sequence>
<keyword id="KW-0025">Alternative splicing</keyword>
<keyword id="KW-0460">Magnesium</keyword>
<keyword id="KW-0479">Metal-binding</keyword>
<keyword id="KW-0489">Methyltransferase</keyword>
<keyword id="KW-1185">Reference proteome</keyword>
<keyword id="KW-0949">S-adenosyl-L-methionine</keyword>
<keyword id="KW-0808">Transferase</keyword>
<dbReference type="EC" id="2.1.1.175"/>
<dbReference type="EMBL" id="AP000364">
    <property type="protein sequence ID" value="BAD08718.1"/>
    <property type="molecule type" value="Genomic_DNA"/>
</dbReference>
<dbReference type="EMBL" id="AP000364">
    <property type="protein sequence ID" value="BAD08719.1"/>
    <property type="molecule type" value="Genomic_DNA"/>
</dbReference>
<dbReference type="EMBL" id="AP008214">
    <property type="protein sequence ID" value="BAF24057.1"/>
    <property type="molecule type" value="Genomic_DNA"/>
</dbReference>
<dbReference type="EMBL" id="AP014964">
    <property type="protein sequence ID" value="BAT06084.1"/>
    <property type="molecule type" value="Genomic_DNA"/>
</dbReference>
<dbReference type="EMBL" id="AP014964">
    <property type="protein sequence ID" value="BAT06085.1"/>
    <property type="molecule type" value="Genomic_DNA"/>
</dbReference>
<dbReference type="EMBL" id="CM000145">
    <property type="protein sequence ID" value="EEE68938.1"/>
    <property type="molecule type" value="Genomic_DNA"/>
</dbReference>
<dbReference type="EMBL" id="AK061757">
    <property type="protein sequence ID" value="BAG88094.1"/>
    <property type="molecule type" value="mRNA"/>
</dbReference>
<dbReference type="EMBL" id="AK065515">
    <property type="protein sequence ID" value="BAG89547.1"/>
    <property type="molecule type" value="mRNA"/>
</dbReference>
<dbReference type="RefSeq" id="XP_015649763.1">
    <property type="nucleotide sequence ID" value="XM_015794277.1"/>
</dbReference>
<dbReference type="SMR" id="Q7F8T6"/>
<dbReference type="FunCoup" id="Q7F8T6">
    <property type="interactions" value="72"/>
</dbReference>
<dbReference type="STRING" id="39947.Q7F8T6"/>
<dbReference type="PaxDb" id="39947-Q7F8T6"/>
<dbReference type="EnsemblPlants" id="Os08t0498400-01">
    <molecule id="Q7F8T6-1"/>
    <property type="protein sequence ID" value="Os08t0498400-01"/>
    <property type="gene ID" value="Os08g0498400"/>
</dbReference>
<dbReference type="Gramene" id="Os08t0498400-01">
    <molecule id="Q7F8T6-1"/>
    <property type="protein sequence ID" value="Os08t0498400-01"/>
    <property type="gene ID" value="Os08g0498400"/>
</dbReference>
<dbReference type="KEGG" id="dosa:Os08g0498400"/>
<dbReference type="eggNOG" id="KOG1663">
    <property type="taxonomic scope" value="Eukaryota"/>
</dbReference>
<dbReference type="HOGENOM" id="CLU_067676_5_0_1"/>
<dbReference type="InParanoid" id="Q7F8T6"/>
<dbReference type="OMA" id="HITEQHA"/>
<dbReference type="OrthoDB" id="10251242at2759"/>
<dbReference type="SABIO-RK" id="Q7F8T6"/>
<dbReference type="Proteomes" id="UP000000763">
    <property type="component" value="Chromosome 8"/>
</dbReference>
<dbReference type="Proteomes" id="UP000007752">
    <property type="component" value="Chromosome 8"/>
</dbReference>
<dbReference type="Proteomes" id="UP000059680">
    <property type="component" value="Chromosome 8"/>
</dbReference>
<dbReference type="GO" id="GO:0046872">
    <property type="term" value="F:metal ion binding"/>
    <property type="evidence" value="ECO:0007669"/>
    <property type="project" value="UniProtKB-KW"/>
</dbReference>
<dbReference type="GO" id="GO:0008171">
    <property type="term" value="F:O-methyltransferase activity"/>
    <property type="evidence" value="ECO:0007669"/>
    <property type="project" value="InterPro"/>
</dbReference>
<dbReference type="GO" id="GO:0008757">
    <property type="term" value="F:S-adenosylmethionine-dependent methyltransferase activity"/>
    <property type="evidence" value="ECO:0000314"/>
    <property type="project" value="UniProtKB"/>
</dbReference>
<dbReference type="GO" id="GO:0032259">
    <property type="term" value="P:methylation"/>
    <property type="evidence" value="ECO:0000314"/>
    <property type="project" value="UniProtKB"/>
</dbReference>
<dbReference type="CDD" id="cd02440">
    <property type="entry name" value="AdoMet_MTases"/>
    <property type="match status" value="1"/>
</dbReference>
<dbReference type="FunFam" id="3.40.50.150:FF:000147">
    <property type="entry name" value="Caffeoyl-CoA O-methyltransferase 1"/>
    <property type="match status" value="1"/>
</dbReference>
<dbReference type="Gene3D" id="3.40.50.150">
    <property type="entry name" value="Vaccinia Virus protein VP39"/>
    <property type="match status" value="1"/>
</dbReference>
<dbReference type="InterPro" id="IPR050362">
    <property type="entry name" value="Cation-dep_OMT"/>
</dbReference>
<dbReference type="InterPro" id="IPR029063">
    <property type="entry name" value="SAM-dependent_MTases_sf"/>
</dbReference>
<dbReference type="InterPro" id="IPR002935">
    <property type="entry name" value="SAM_O-MeTrfase"/>
</dbReference>
<dbReference type="PANTHER" id="PTHR10509">
    <property type="entry name" value="O-METHYLTRANSFERASE-RELATED"/>
    <property type="match status" value="1"/>
</dbReference>
<dbReference type="PANTHER" id="PTHR10509:SF30">
    <property type="entry name" value="TRICIN SYNTHASE 2"/>
    <property type="match status" value="1"/>
</dbReference>
<dbReference type="Pfam" id="PF01596">
    <property type="entry name" value="Methyltransf_3"/>
    <property type="match status" value="1"/>
</dbReference>
<dbReference type="SUPFAM" id="SSF53335">
    <property type="entry name" value="S-adenosyl-L-methionine-dependent methyltransferases"/>
    <property type="match status" value="1"/>
</dbReference>
<dbReference type="PROSITE" id="PS51682">
    <property type="entry name" value="SAM_OMT_I"/>
    <property type="match status" value="1"/>
</dbReference>
<protein>
    <recommendedName>
        <fullName>Tricin synthase 2</fullName>
        <ecNumber>2.1.1.175</ecNumber>
    </recommendedName>
    <alternativeName>
        <fullName>Caffeoyl-CoA 3-O-methyltransferase ROMT17</fullName>
    </alternativeName>
</protein>
<reference key="1">
    <citation type="journal article" date="2005" name="Nature">
        <title>The map-based sequence of the rice genome.</title>
        <authorList>
            <consortium name="International rice genome sequencing project (IRGSP)"/>
        </authorList>
    </citation>
    <scope>NUCLEOTIDE SEQUENCE [LARGE SCALE GENOMIC DNA]</scope>
    <source>
        <strain>cv. Nipponbare</strain>
    </source>
</reference>
<reference key="2">
    <citation type="journal article" date="2008" name="Nucleic Acids Res.">
        <title>The rice annotation project database (RAP-DB): 2008 update.</title>
        <authorList>
            <consortium name="The rice annotation project (RAP)"/>
        </authorList>
    </citation>
    <scope>GENOME REANNOTATION</scope>
    <source>
        <strain>cv. Nipponbare</strain>
    </source>
</reference>
<reference key="3">
    <citation type="journal article" date="2013" name="Rice">
        <title>Improvement of the Oryza sativa Nipponbare reference genome using next generation sequence and optical map data.</title>
        <authorList>
            <person name="Kawahara Y."/>
            <person name="de la Bastide M."/>
            <person name="Hamilton J.P."/>
            <person name="Kanamori H."/>
            <person name="McCombie W.R."/>
            <person name="Ouyang S."/>
            <person name="Schwartz D.C."/>
            <person name="Tanaka T."/>
            <person name="Wu J."/>
            <person name="Zhou S."/>
            <person name="Childs K.L."/>
            <person name="Davidson R.M."/>
            <person name="Lin H."/>
            <person name="Quesada-Ocampo L."/>
            <person name="Vaillancourt B."/>
            <person name="Sakai H."/>
            <person name="Lee S.S."/>
            <person name="Kim J."/>
            <person name="Numa H."/>
            <person name="Itoh T."/>
            <person name="Buell C.R."/>
            <person name="Matsumoto T."/>
        </authorList>
    </citation>
    <scope>GENOME REANNOTATION</scope>
    <source>
        <strain>cv. Nipponbare</strain>
    </source>
</reference>
<reference key="4">
    <citation type="journal article" date="2005" name="PLoS Biol.">
        <title>The genomes of Oryza sativa: a history of duplications.</title>
        <authorList>
            <person name="Yu J."/>
            <person name="Wang J."/>
            <person name="Lin W."/>
            <person name="Li S."/>
            <person name="Li H."/>
            <person name="Zhou J."/>
            <person name="Ni P."/>
            <person name="Dong W."/>
            <person name="Hu S."/>
            <person name="Zeng C."/>
            <person name="Zhang J."/>
            <person name="Zhang Y."/>
            <person name="Li R."/>
            <person name="Xu Z."/>
            <person name="Li S."/>
            <person name="Li X."/>
            <person name="Zheng H."/>
            <person name="Cong L."/>
            <person name="Lin L."/>
            <person name="Yin J."/>
            <person name="Geng J."/>
            <person name="Li G."/>
            <person name="Shi J."/>
            <person name="Liu J."/>
            <person name="Lv H."/>
            <person name="Li J."/>
            <person name="Wang J."/>
            <person name="Deng Y."/>
            <person name="Ran L."/>
            <person name="Shi X."/>
            <person name="Wang X."/>
            <person name="Wu Q."/>
            <person name="Li C."/>
            <person name="Ren X."/>
            <person name="Wang J."/>
            <person name="Wang X."/>
            <person name="Li D."/>
            <person name="Liu D."/>
            <person name="Zhang X."/>
            <person name="Ji Z."/>
            <person name="Zhao W."/>
            <person name="Sun Y."/>
            <person name="Zhang Z."/>
            <person name="Bao J."/>
            <person name="Han Y."/>
            <person name="Dong L."/>
            <person name="Ji J."/>
            <person name="Chen P."/>
            <person name="Wu S."/>
            <person name="Liu J."/>
            <person name="Xiao Y."/>
            <person name="Bu D."/>
            <person name="Tan J."/>
            <person name="Yang L."/>
            <person name="Ye C."/>
            <person name="Zhang J."/>
            <person name="Xu J."/>
            <person name="Zhou Y."/>
            <person name="Yu Y."/>
            <person name="Zhang B."/>
            <person name="Zhuang S."/>
            <person name="Wei H."/>
            <person name="Liu B."/>
            <person name="Lei M."/>
            <person name="Yu H."/>
            <person name="Li Y."/>
            <person name="Xu H."/>
            <person name="Wei S."/>
            <person name="He X."/>
            <person name="Fang L."/>
            <person name="Zhang Z."/>
            <person name="Zhang Y."/>
            <person name="Huang X."/>
            <person name="Su Z."/>
            <person name="Tong W."/>
            <person name="Li J."/>
            <person name="Tong Z."/>
            <person name="Li S."/>
            <person name="Ye J."/>
            <person name="Wang L."/>
            <person name="Fang L."/>
            <person name="Lei T."/>
            <person name="Chen C.-S."/>
            <person name="Chen H.-C."/>
            <person name="Xu Z."/>
            <person name="Li H."/>
            <person name="Huang H."/>
            <person name="Zhang F."/>
            <person name="Xu H."/>
            <person name="Li N."/>
            <person name="Zhao C."/>
            <person name="Li S."/>
            <person name="Dong L."/>
            <person name="Huang Y."/>
            <person name="Li L."/>
            <person name="Xi Y."/>
            <person name="Qi Q."/>
            <person name="Li W."/>
            <person name="Zhang B."/>
            <person name="Hu W."/>
            <person name="Zhang Y."/>
            <person name="Tian X."/>
            <person name="Jiao Y."/>
            <person name="Liang X."/>
            <person name="Jin J."/>
            <person name="Gao L."/>
            <person name="Zheng W."/>
            <person name="Hao B."/>
            <person name="Liu S.-M."/>
            <person name="Wang W."/>
            <person name="Yuan L."/>
            <person name="Cao M."/>
            <person name="McDermott J."/>
            <person name="Samudrala R."/>
            <person name="Wang J."/>
            <person name="Wong G.K.-S."/>
            <person name="Yang H."/>
        </authorList>
    </citation>
    <scope>NUCLEOTIDE SEQUENCE [LARGE SCALE GENOMIC DNA]</scope>
    <source>
        <strain>cv. Nipponbare</strain>
    </source>
</reference>
<reference key="5">
    <citation type="journal article" date="2003" name="Science">
        <title>Collection, mapping, and annotation of over 28,000 cDNA clones from japonica rice.</title>
        <authorList>
            <consortium name="The rice full-length cDNA consortium"/>
        </authorList>
    </citation>
    <scope>NUCLEOTIDE SEQUENCE [LARGE SCALE MRNA] (ISOFORMS 1 AND 2)</scope>
    <source>
        <strain>cv. Nipponbare</strain>
    </source>
</reference>
<reference key="6">
    <citation type="journal article" date="2008" name="Planta">
        <title>Cation dependent O-methyltransferases from rice.</title>
        <authorList>
            <person name="Lee Y.J."/>
            <person name="Kim B.G."/>
            <person name="Chong Y."/>
            <person name="Lim Y."/>
            <person name="Ahn J.H."/>
        </authorList>
    </citation>
    <scope>FUNCTION</scope>
    <scope>CATALYTIC ACTIVITY</scope>
    <scope>TISSUE SPECIFICITY</scope>
    <scope>BIOPHYSICOCHEMICAL PROPERTIES</scope>
    <scope>COFACTOR</scope>
    <scope>MUTAGENESIS OF GLU-112; ASP-208; ASP-234 AND ASN-235</scope>
</reference>
<gene>
    <name type="primary">ROMT-17</name>
    <name type="ordered locus">Os08g0498400</name>
    <name type="ordered locus">LOC_Os08g38910</name>
    <name type="ORF">OsJ_27815</name>
    <name type="ORF">P0026F07.26-1</name>
    <name type="ORF">P0026F07.26-2</name>
</gene>
<proteinExistence type="evidence at protein level"/>
<organism>
    <name type="scientific">Oryza sativa subsp. japonica</name>
    <name type="common">Rice</name>
    <dbReference type="NCBI Taxonomy" id="39947"/>
    <lineage>
        <taxon>Eukaryota</taxon>
        <taxon>Viridiplantae</taxon>
        <taxon>Streptophyta</taxon>
        <taxon>Embryophyta</taxon>
        <taxon>Tracheophyta</taxon>
        <taxon>Spermatophyta</taxon>
        <taxon>Magnoliopsida</taxon>
        <taxon>Liliopsida</taxon>
        <taxon>Poales</taxon>
        <taxon>Poaceae</taxon>
        <taxon>BOP clade</taxon>
        <taxon>Oryzoideae</taxon>
        <taxon>Oryzeae</taxon>
        <taxon>Oryzinae</taxon>
        <taxon>Oryza</taxon>
        <taxon>Oryza sativa</taxon>
    </lineage>
</organism>
<name>OMT17_ORYSJ</name>
<comment type="function">
    <text evidence="3">Catalyzes the stepwise methylation of tricetin to its 3'-mono- and 3',5'-dimethyl ethers. No 3',4',5'-trimethylated ester derivatives are produced. Can use caffeoyl CoA, 5-hydroxyferulic acid, luteolin, tricetin, quercetin, myrcetin and 7,8-dihydroxyflavone as substrates, but not naringenin, apigenin or kaempferol. The 2,3-double bond and the O-dihydroxyl group of the substrate are both required for catalytic activity of the enzyme.</text>
</comment>
<comment type="catalytic activity">
    <reaction evidence="3">
        <text>tricetin + 2 S-adenosyl-L-methionine = 3',5'-di-O-methyltricetin + 2 S-adenosyl-L-homocysteine + 2 H(+)</text>
        <dbReference type="Rhea" id="RHEA:32347"/>
        <dbReference type="ChEBI" id="CHEBI:15378"/>
        <dbReference type="ChEBI" id="CHEBI:57856"/>
        <dbReference type="ChEBI" id="CHEBI:59789"/>
        <dbReference type="ChEBI" id="CHEBI:60016"/>
        <dbReference type="ChEBI" id="CHEBI:60045"/>
        <dbReference type="EC" id="2.1.1.175"/>
    </reaction>
</comment>
<comment type="cofactor">
    <cofactor evidence="3">
        <name>Mg(2+)</name>
        <dbReference type="ChEBI" id="CHEBI:18420"/>
    </cofactor>
    <cofactor evidence="3">
        <name>Mn(2+)</name>
        <dbReference type="ChEBI" id="CHEBI:29035"/>
    </cofactor>
    <text evidence="3">Binds 1 divalent metal cation per subunit. Fully active with Mg(2+) and active at 70% with Mn(2+). Active at 40% with Co(2+) ion and less than 10% with Ca(2+) or Zn(2+) ions.</text>
</comment>
<comment type="biophysicochemical properties">
    <kinetics>
        <KM evidence="3">36 uM for tricetin</KM>
        <KM evidence="3">104 uM for luteolin</KM>
        <KM evidence="3">44 uM for myricetin</KM>
        <KM evidence="3">72 uM for caffeoyl-CoA</KM>
    </kinetics>
</comment>
<comment type="alternative products">
    <event type="alternative splicing"/>
    <isoform>
        <id>Q7F8T6-1</id>
        <name>1</name>
        <sequence type="displayed"/>
    </isoform>
    <isoform>
        <id>Q7F8T6-2</id>
        <name>2</name>
        <sequence type="described" ref="VSP_042108"/>
    </isoform>
</comment>
<comment type="tissue specificity">
    <text evidence="3">Expressed in stems only.</text>
</comment>
<comment type="similarity">
    <text evidence="1">Belongs to the class I-like SAM-binding methyltransferase superfamily. Cation-dependent O-methyltransferase family. CCoAMT subfamily.</text>
</comment>